<name>CARA_YEAST</name>
<sequence>MSSAATKATFCIQNGPSFEGISFGANKSVAGETVFTTSLVGYPESMTDPSYRGQILVFTQPLIGNYGVPSGEARDEYNLLKYFESPHIHVVGIVVAEYAYQYSHWTAVESLAQWCQREGVAAITGVDTRELVQYLREQGSSLGRITLADHDPVPYVNPMKTNLVAQVTTKKPFHVSALPGKAKANVALIDCGVKENIIRCLVKRGANVTVFPYDYRIQDVASEFDGIFLSNGPGNPELCQATISNVRELLNNPVYDCIPIFGICLGHQLLALASGASTHKLKYGNRAHNIPAMDLTTGQCHITSQNHGYAVDPETLPKDQWKPYFVNLNDKSNEGMIHLQRPIFSTQFHPEAKGGPLDTAILFDKFFDNIEKYQLQSQAKSSISLKVTYSTDKSRLQSINVTKLAKERVLF</sequence>
<keyword id="KW-0028">Amino-acid biosynthesis</keyword>
<keyword id="KW-0055">Arginine biosynthesis</keyword>
<keyword id="KW-0067">ATP-binding</keyword>
<keyword id="KW-0963">Cytoplasm</keyword>
<keyword id="KW-0436">Ligase</keyword>
<keyword id="KW-0547">Nucleotide-binding</keyword>
<keyword id="KW-1185">Reference proteome</keyword>
<evidence type="ECO:0000250" key="1">
    <source>
        <dbReference type="UniProtKB" id="P0A6F1"/>
    </source>
</evidence>
<evidence type="ECO:0000255" key="2">
    <source>
        <dbReference type="PROSITE-ProRule" id="PRU00605"/>
    </source>
</evidence>
<evidence type="ECO:0000269" key="3">
    <source>
    </source>
</evidence>
<evidence type="ECO:0000269" key="4">
    <source>
    </source>
</evidence>
<evidence type="ECO:0000269" key="5">
    <source>
    </source>
</evidence>
<evidence type="ECO:0000269" key="6">
    <source>
    </source>
</evidence>
<evidence type="ECO:0000269" key="7">
    <source>
    </source>
</evidence>
<evidence type="ECO:0000269" key="8">
    <source>
    </source>
</evidence>
<evidence type="ECO:0000269" key="9">
    <source>
    </source>
</evidence>
<evidence type="ECO:0000269" key="10">
    <source>
    </source>
</evidence>
<evidence type="ECO:0000269" key="11">
    <source>
    </source>
</evidence>
<evidence type="ECO:0000269" key="12">
    <source>
    </source>
</evidence>
<evidence type="ECO:0000269" key="13">
    <source ref="8"/>
</evidence>
<evidence type="ECO:0000305" key="14"/>
<evidence type="ECO:0000305" key="15">
    <source>
    </source>
</evidence>
<evidence type="ECO:0000305" key="16">
    <source>
    </source>
</evidence>
<accession>P07258</accession>
<accession>D6W302</accession>
<comment type="function">
    <text evidence="8 10 11 13">Small subunit of the arginine-specific carbamoyl phosphate synthase (CPSase). CPSase catalyzes the formation of carbamoyl phosphate from the ammonia moiety of glutamine, carbonate, and phosphate donated by ATP, constituting the first step of 2 biosynthetic pathways, one leading to arginine and/or urea and the other to pyrimidine nucleotides. The small subunit (glutamine amidotransferase) binds and cleaves glutamine to supply the large subunit with the substrate ammonia.</text>
</comment>
<comment type="catalytic activity">
    <reaction evidence="8 9 11">
        <text>hydrogencarbonate + L-glutamine + 2 ATP + H2O = carbamoyl phosphate + L-glutamate + 2 ADP + phosphate + 2 H(+)</text>
        <dbReference type="Rhea" id="RHEA:18633"/>
        <dbReference type="ChEBI" id="CHEBI:15377"/>
        <dbReference type="ChEBI" id="CHEBI:15378"/>
        <dbReference type="ChEBI" id="CHEBI:17544"/>
        <dbReference type="ChEBI" id="CHEBI:29985"/>
        <dbReference type="ChEBI" id="CHEBI:30616"/>
        <dbReference type="ChEBI" id="CHEBI:43474"/>
        <dbReference type="ChEBI" id="CHEBI:58228"/>
        <dbReference type="ChEBI" id="CHEBI:58359"/>
        <dbReference type="ChEBI" id="CHEBI:456216"/>
        <dbReference type="EC" id="6.3.5.5"/>
    </reaction>
</comment>
<comment type="catalytic activity">
    <molecule>Carbamoyl phosphate synthase arginine-specific small chain</molecule>
    <reaction evidence="8 9">
        <text>L-glutamine + H2O = L-glutamate + NH4(+)</text>
        <dbReference type="Rhea" id="RHEA:15889"/>
        <dbReference type="ChEBI" id="CHEBI:15377"/>
        <dbReference type="ChEBI" id="CHEBI:28938"/>
        <dbReference type="ChEBI" id="CHEBI:29985"/>
        <dbReference type="ChEBI" id="CHEBI:58359"/>
    </reaction>
</comment>
<comment type="biophysicochemical properties">
    <kinetics>
        <KM evidence="8">1.25 mM for glutamine</KM>
    </kinetics>
    <phDependence>
        <text evidence="9">Optimum pH is 8.0.</text>
    </phDependence>
</comment>
<comment type="pathway">
    <text evidence="16">Amino-acid biosynthesis; L-arginine biosynthesis; carbamoyl phosphate from bicarbonate: step 1/1.</text>
</comment>
<comment type="subunit">
    <text evidence="8 11">Heterodimer composed of 2 chains; the small (or glutamine) chain promotes the hydrolysis of glutamine to ammonia, which is used by the large (or ammonia) chain to synthesize carbamoyl phosphate.</text>
</comment>
<comment type="subcellular location">
    <subcellularLocation>
        <location evidence="4 6 7">Cytoplasm</location>
    </subcellularLocation>
</comment>
<comment type="induction">
    <text evidence="3">Repressed by arginine.</text>
</comment>
<comment type="miscellaneous">
    <text evidence="15 16">In S.cerevisiae, this enzyme is synthesized by two pathway-specific (arginine and pyrimidine) genes under separate control. One is linked to the arginine pathway and is designated CPSase A (CPA1-CPA2), it is repressed by arginine. A second one, CPSase P, is part of a multifunctional protein (URA3) encoding 3 enzymatic activities of the pyrimidine pathway (GATase, CPSase, and ATCase); it is feedback inhibited and repressed by pyrimidines. The 2 synthases appear to contribute to the formation of a single cellular pool of carbamoyl phosphate, in contrast to Schizosaccharomyces pombe and Neurospora crassa, in which the arginine pathway CPSase is localized in mitochondria and the carbamoyl phosphate synthesized by each synthase is channeled to its respective pathway.</text>
</comment>
<comment type="miscellaneous">
    <text evidence="5">Present with 2580 molecules/cell in log phase SD medium.</text>
</comment>
<comment type="similarity">
    <text evidence="14">Belongs to the CarA family.</text>
</comment>
<reference key="1">
    <citation type="journal article" date="1985" name="Eur. J. Biochem.">
        <title>Nucleotide sequence of yeast gene CP A1 encoding the small subunit of arginine-pathway carbamoyl-phosphate synthetase. Homology of the deduced amino acid sequence to other glutamine amidotransferases.</title>
        <authorList>
            <person name="Werner M."/>
            <person name="Feller A."/>
            <person name="Pierard A."/>
        </authorList>
    </citation>
    <scope>NUCLEOTIDE SEQUENCE [GENOMIC DNA]</scope>
</reference>
<reference key="2">
    <citation type="journal article" date="1984" name="J. Biol. Chem.">
        <title>Sequence of the small subunit of yeast carbamyl phosphate synthetase and identification of its catalytic domain.</title>
        <authorList>
            <person name="Nyunoya H."/>
            <person name="Lusty C.J."/>
        </authorList>
    </citation>
    <scope>NUCLEOTIDE SEQUENCE [GENOMIC DNA]</scope>
</reference>
<reference key="3">
    <citation type="journal article" date="1997" name="Yeast">
        <title>Sequence and analysis of a 36.2 kb fragment from the right arm of yeast chromosome XV reveals 19 open reading frames including SNF2 (5' end), CPA1, SLY41, a putative transport ATPase, a putative ribosomal protein and an SNF2 homologue.</title>
        <authorList>
            <person name="Poirey R."/>
            <person name="Cziepluch C."/>
            <person name="Tobiasch E."/>
            <person name="Pujol A."/>
            <person name="Kordes E."/>
            <person name="Jauniaux J.-C."/>
        </authorList>
    </citation>
    <scope>NUCLEOTIDE SEQUENCE [GENOMIC DNA]</scope>
    <source>
        <strain>ATCC 96604 / S288c / FY1679</strain>
    </source>
</reference>
<reference key="4">
    <citation type="journal article" date="1997" name="Nature">
        <title>The nucleotide sequence of Saccharomyces cerevisiae chromosome XV.</title>
        <authorList>
            <person name="Dujon B."/>
            <person name="Albermann K."/>
            <person name="Aldea M."/>
            <person name="Alexandraki D."/>
            <person name="Ansorge W."/>
            <person name="Arino J."/>
            <person name="Benes V."/>
            <person name="Bohn C."/>
            <person name="Bolotin-Fukuhara M."/>
            <person name="Bordonne R."/>
            <person name="Boyer J."/>
            <person name="Camasses A."/>
            <person name="Casamayor A."/>
            <person name="Casas C."/>
            <person name="Cheret G."/>
            <person name="Cziepluch C."/>
            <person name="Daignan-Fornier B."/>
            <person name="Dang V.-D."/>
            <person name="de Haan M."/>
            <person name="Delius H."/>
            <person name="Durand P."/>
            <person name="Fairhead C."/>
            <person name="Feldmann H."/>
            <person name="Gaillon L."/>
            <person name="Galisson F."/>
            <person name="Gamo F.-J."/>
            <person name="Gancedo C."/>
            <person name="Goffeau A."/>
            <person name="Goulding S.E."/>
            <person name="Grivell L.A."/>
            <person name="Habbig B."/>
            <person name="Hand N.J."/>
            <person name="Hani J."/>
            <person name="Hattenhorst U."/>
            <person name="Hebling U."/>
            <person name="Hernando Y."/>
            <person name="Herrero E."/>
            <person name="Heumann K."/>
            <person name="Hiesel R."/>
            <person name="Hilger F."/>
            <person name="Hofmann B."/>
            <person name="Hollenberg C.P."/>
            <person name="Hughes B."/>
            <person name="Jauniaux J.-C."/>
            <person name="Kalogeropoulos A."/>
            <person name="Katsoulou C."/>
            <person name="Kordes E."/>
            <person name="Lafuente M.J."/>
            <person name="Landt O."/>
            <person name="Louis E.J."/>
            <person name="Maarse A.C."/>
            <person name="Madania A."/>
            <person name="Mannhaupt G."/>
            <person name="Marck C."/>
            <person name="Martin R.P."/>
            <person name="Mewes H.-W."/>
            <person name="Michaux G."/>
            <person name="Paces V."/>
            <person name="Parle-McDermott A.G."/>
            <person name="Pearson B.M."/>
            <person name="Perrin A."/>
            <person name="Pettersson B."/>
            <person name="Poch O."/>
            <person name="Pohl T.M."/>
            <person name="Poirey R."/>
            <person name="Portetelle D."/>
            <person name="Pujol A."/>
            <person name="Purnelle B."/>
            <person name="Ramezani Rad M."/>
            <person name="Rechmann S."/>
            <person name="Schwager C."/>
            <person name="Schweizer M."/>
            <person name="Sor F."/>
            <person name="Sterky F."/>
            <person name="Tarassov I.A."/>
            <person name="Teodoru C."/>
            <person name="Tettelin H."/>
            <person name="Thierry A."/>
            <person name="Tobiasch E."/>
            <person name="Tzermia M."/>
            <person name="Uhlen M."/>
            <person name="Unseld M."/>
            <person name="Valens M."/>
            <person name="Vandenbol M."/>
            <person name="Vetter I."/>
            <person name="Vlcek C."/>
            <person name="Voet M."/>
            <person name="Volckaert G."/>
            <person name="Voss H."/>
            <person name="Wambutt R."/>
            <person name="Wedler H."/>
            <person name="Wiemann S."/>
            <person name="Winsor B."/>
            <person name="Wolfe K.H."/>
            <person name="Zollner A."/>
            <person name="Zumstein E."/>
            <person name="Kleine K."/>
        </authorList>
    </citation>
    <scope>NUCLEOTIDE SEQUENCE [LARGE SCALE GENOMIC DNA]</scope>
    <source>
        <strain>ATCC 204508 / S288c</strain>
    </source>
</reference>
<reference key="5">
    <citation type="journal article" date="2014" name="G3 (Bethesda)">
        <title>The reference genome sequence of Saccharomyces cerevisiae: Then and now.</title>
        <authorList>
            <person name="Engel S.R."/>
            <person name="Dietrich F.S."/>
            <person name="Fisk D.G."/>
            <person name="Binkley G."/>
            <person name="Balakrishnan R."/>
            <person name="Costanzo M.C."/>
            <person name="Dwight S.S."/>
            <person name="Hitz B.C."/>
            <person name="Karra K."/>
            <person name="Nash R.S."/>
            <person name="Weng S."/>
            <person name="Wong E.D."/>
            <person name="Lloyd P."/>
            <person name="Skrzypek M.S."/>
            <person name="Miyasato S.R."/>
            <person name="Simison M."/>
            <person name="Cherry J.M."/>
        </authorList>
    </citation>
    <scope>GENOME REANNOTATION</scope>
    <source>
        <strain>ATCC 204508 / S288c</strain>
    </source>
</reference>
<reference key="6">
    <citation type="journal article" date="1987" name="Cell">
        <title>The leader peptide of yeast gene CPA1 is essential for the translational repression of its expression.</title>
        <authorList>
            <person name="Werner M."/>
            <person name="Feller A."/>
            <person name="Messenguy F."/>
            <person name="Pierard A."/>
        </authorList>
    </citation>
    <scope>NUCLEOTIDE SEQUENCE [GENOMIC DNA] OF 1-42</scope>
</reference>
<reference key="7">
    <citation type="journal article" date="1965" name="J. Gen. Microbiol.">
        <title>The biosynthesis of carbamoyl phosphate in Saccharomyces cerevisiae.</title>
        <authorList>
            <person name="Lacroute F."/>
            <person name="Pierard A."/>
            <person name="Grenson M."/>
            <person name="Wiame J.M."/>
        </authorList>
    </citation>
    <scope>FUNCTION</scope>
    <scope>CATALYTIC ACTIVITY</scope>
    <scope>PATHWAY</scope>
</reference>
<reference key="8">
    <citation type="book" date="1973" name="The Enzymes of Glutamine Metabolism">
        <title>A comparison of the organization of carbamylphosphate synthesis in Saccharomyces cerevisiae and Escherichia coli, based on genetical and biochemical evidences.</title>
        <editorList>
            <person name="Prusiner S.B."/>
            <person name="Stadtman E.R."/>
        </editorList>
        <authorList>
            <person name="Pierard A."/>
            <person name="Grenson M."/>
            <person name="Glansdorff N."/>
            <person name="Wiame J.M."/>
        </authorList>
    </citation>
    <scope>FUNCTION</scope>
</reference>
<reference key="9">
    <citation type="journal article" date="1973" name="Symp. Soc. Exp. Biol.">
        <title>Control of transcarbamoylation in micro-organisms.</title>
        <authorList>
            <person name="Wiame J.M."/>
            <person name="Stalon V."/>
            <person name="Pierard A."/>
            <person name="Messenguy F."/>
        </authorList>
    </citation>
    <scope>FUNCTION</scope>
</reference>
<reference key="10">
    <citation type="journal article" date="1977" name="Eur. J. Biochem.">
        <title>Change in location of ornithine carbamoyltransferase and carbamoylphosphate synthetase among yeasts in relation to the arginase/ornithine carbamoyltransferase regulatory complex and the energy status of the cells.</title>
        <authorList>
            <person name="Urrestarazu L.A."/>
            <person name="Vissers S."/>
            <person name="Wiame J.M."/>
        </authorList>
    </citation>
    <scope>SUBCELLULAR LOCATION</scope>
</reference>
<reference key="11">
    <citation type="journal article" date="1978" name="J. Bacteriol.">
        <title>Arginine metabolism in Saccharomyces cerevisiae: subcellular localization of the enzymes.</title>
        <authorList>
            <person name="Jauniaux J.-C."/>
            <person name="Urrestarazu L.A."/>
            <person name="Wiame J.-M."/>
        </authorList>
    </citation>
    <scope>SUBCELLULAR LOCATION</scope>
</reference>
<reference key="12">
    <citation type="journal article" date="1978" name="J. Bacteriol.">
        <title>Structure-function relationships in the arginine pathway carbamoylphosphate synthase of Saccharomyces cerevisiae.</title>
        <authorList>
            <person name="Pierard A."/>
            <person name="Schroeter B."/>
        </authorList>
    </citation>
    <scope>CATALYTIC ACTIVITY</scope>
    <scope>BIOPHYSICOCHEMICAL PROPERTIES</scope>
    <scope>SUBUNIT</scope>
</reference>
<reference key="13">
    <citation type="journal article" date="1978" name="J. Gen. Microbiol.">
        <title>Purification and properties of the arginine-specific carbamoyl-phosphate synthase from Saccharomyces cerevisiae.</title>
        <authorList>
            <person name="Price C.W."/>
            <person name="Holwell J.H."/>
            <person name="Abdelal A.T."/>
        </authorList>
    </citation>
    <scope>CATALYTIC ACTIVITY</scope>
    <scope>BIOPHYSICOCHEMICAL PROPERTIES</scope>
</reference>
<reference key="14">
    <citation type="journal article" date="1997" name="Yeast">
        <title>In vivo mutational analysis of highly conserved amino acid residues of the small subunit Cpa1p of the carbamylphosphate synthetase of Saccharomyces cerevisiae.</title>
        <authorList>
            <person name="Bernard A."/>
            <person name="Erbs P."/>
            <person name="Demuyter P."/>
            <person name="Jund R."/>
        </authorList>
    </citation>
    <scope>MUTAGENESIS OF CYS-264; HIS-307 AND HIS-349</scope>
</reference>
<reference key="15">
    <citation type="journal article" date="1999" name="J. Biol. Chem.">
        <title>A highly conserved mechanism of regulated ribosome stalling mediated by fungal arginine attenuator peptides that appears independent of the charging status of arginyl-tRNAs.</title>
        <authorList>
            <person name="Wang Z."/>
            <person name="Gaba A."/>
            <person name="Sachs M.S."/>
        </authorList>
    </citation>
    <scope>INDUCTION</scope>
</reference>
<reference key="16">
    <citation type="journal article" date="2003" name="Nature">
        <title>Global analysis of protein localization in budding yeast.</title>
        <authorList>
            <person name="Huh W.-K."/>
            <person name="Falvo J.V."/>
            <person name="Gerke L.C."/>
            <person name="Carroll A.S."/>
            <person name="Howson R.W."/>
            <person name="Weissman J.S."/>
            <person name="O'Shea E.K."/>
        </authorList>
    </citation>
    <scope>SUBCELLULAR LOCATION [LARGE SCALE ANALYSIS]</scope>
</reference>
<reference key="17">
    <citation type="journal article" date="2003" name="Nature">
        <title>Global analysis of protein expression in yeast.</title>
        <authorList>
            <person name="Ghaemmaghami S."/>
            <person name="Huh W.-K."/>
            <person name="Bower K."/>
            <person name="Howson R.W."/>
            <person name="Belle A."/>
            <person name="Dephoure N."/>
            <person name="O'Shea E.K."/>
            <person name="Weissman J.S."/>
        </authorList>
    </citation>
    <scope>LEVEL OF PROTEIN EXPRESSION [LARGE SCALE ANALYSIS]</scope>
</reference>
<gene>
    <name type="primary">CPA1</name>
    <name type="ordered locus">YOR303W</name>
</gene>
<feature type="chain" id="PRO_0000112372" description="Carbamoyl phosphate synthase arginine-specific small chain">
    <location>
        <begin position="1"/>
        <end position="411"/>
    </location>
</feature>
<feature type="domain" description="Glutamine amidotransferase type-1" evidence="2">
    <location>
        <begin position="185"/>
        <end position="376"/>
    </location>
</feature>
<feature type="active site" description="Nucleophile" evidence="2">
    <location>
        <position position="264"/>
    </location>
</feature>
<feature type="active site" evidence="2">
    <location>
        <position position="349"/>
    </location>
</feature>
<feature type="active site" evidence="2">
    <location>
        <position position="351"/>
    </location>
</feature>
<feature type="binding site" evidence="1">
    <location>
        <position position="50"/>
    </location>
    <ligand>
        <name>L-glutamine</name>
        <dbReference type="ChEBI" id="CHEBI:58359"/>
    </ligand>
</feature>
<feature type="binding site" evidence="1">
    <location>
        <position position="232"/>
    </location>
    <ligand>
        <name>L-glutamine</name>
        <dbReference type="ChEBI" id="CHEBI:58359"/>
    </ligand>
</feature>
<feature type="binding site" evidence="1">
    <location>
        <position position="234"/>
    </location>
    <ligand>
        <name>L-glutamine</name>
        <dbReference type="ChEBI" id="CHEBI:58359"/>
    </ligand>
</feature>
<feature type="binding site" evidence="1">
    <location>
        <position position="265"/>
    </location>
    <ligand>
        <name>L-glutamine</name>
        <dbReference type="ChEBI" id="CHEBI:58359"/>
    </ligand>
</feature>
<feature type="binding site" evidence="1">
    <location>
        <position position="268"/>
    </location>
    <ligand>
        <name>L-glutamine</name>
        <dbReference type="ChEBI" id="CHEBI:58359"/>
    </ligand>
</feature>
<feature type="binding site" evidence="1">
    <location>
        <position position="306"/>
    </location>
    <ligand>
        <name>L-glutamine</name>
        <dbReference type="ChEBI" id="CHEBI:58359"/>
    </ligand>
</feature>
<feature type="binding site" evidence="1">
    <location>
        <position position="308"/>
    </location>
    <ligand>
        <name>L-glutamine</name>
        <dbReference type="ChEBI" id="CHEBI:58359"/>
    </ligand>
</feature>
<feature type="binding site" evidence="1">
    <location>
        <position position="309"/>
    </location>
    <ligand>
        <name>L-glutamine</name>
        <dbReference type="ChEBI" id="CHEBI:58359"/>
    </ligand>
</feature>
<feature type="mutagenesis site" description="Abolishes glutamine-dependent CPSase activity." evidence="12">
    <original>C</original>
    <variation>D</variation>
    <location>
        <position position="264"/>
    </location>
</feature>
<feature type="mutagenesis site" description="Abolishes glutamine-dependent CPSase activity." evidence="12">
    <original>H</original>
    <variation>D</variation>
    <location>
        <position position="307"/>
    </location>
</feature>
<feature type="mutagenesis site" description="Abolishes glutamine-dependent CPSase activity." evidence="12">
    <original>H</original>
    <variation>D</variation>
    <location>
        <position position="349"/>
    </location>
</feature>
<dbReference type="EC" id="6.3.5.5"/>
<dbReference type="EMBL" id="X01764">
    <property type="protein sequence ID" value="CAA25905.1"/>
    <property type="molecule type" value="Genomic_DNA"/>
</dbReference>
<dbReference type="EMBL" id="K02132">
    <property type="protein sequence ID" value="AAA34525.1"/>
    <property type="molecule type" value="Genomic_DNA"/>
</dbReference>
<dbReference type="EMBL" id="Z75211">
    <property type="protein sequence ID" value="CAA99621.1"/>
    <property type="molecule type" value="Genomic_DNA"/>
</dbReference>
<dbReference type="EMBL" id="M16690">
    <property type="protein sequence ID" value="AAA34527.1"/>
    <property type="molecule type" value="Genomic_DNA"/>
</dbReference>
<dbReference type="EMBL" id="BK006948">
    <property type="protein sequence ID" value="DAA11068.1"/>
    <property type="molecule type" value="Genomic_DNA"/>
</dbReference>
<dbReference type="PIR" id="S67207">
    <property type="entry name" value="SYBYCS"/>
</dbReference>
<dbReference type="RefSeq" id="NP_014947.3">
    <property type="nucleotide sequence ID" value="NM_001183722.3"/>
</dbReference>
<dbReference type="SMR" id="P07258"/>
<dbReference type="BioGRID" id="34691">
    <property type="interactions" value="41"/>
</dbReference>
<dbReference type="ComplexPortal" id="CPX-579">
    <property type="entry name" value="Carbamoyl-phosphate synthase arginine-specific"/>
</dbReference>
<dbReference type="DIP" id="DIP-1024N"/>
<dbReference type="FunCoup" id="P07258">
    <property type="interactions" value="520"/>
</dbReference>
<dbReference type="IntAct" id="P07258">
    <property type="interactions" value="6"/>
</dbReference>
<dbReference type="MINT" id="P07258"/>
<dbReference type="STRING" id="4932.YOR303W"/>
<dbReference type="iPTMnet" id="P07258"/>
<dbReference type="PaxDb" id="4932-YOR303W"/>
<dbReference type="PeptideAtlas" id="P07258"/>
<dbReference type="EnsemblFungi" id="YOR303W_mRNA">
    <property type="protein sequence ID" value="YOR303W"/>
    <property type="gene ID" value="YOR303W"/>
</dbReference>
<dbReference type="GeneID" id="854479"/>
<dbReference type="KEGG" id="sce:YOR303W"/>
<dbReference type="AGR" id="SGD:S000005829"/>
<dbReference type="SGD" id="S000005829">
    <property type="gene designation" value="CPA1"/>
</dbReference>
<dbReference type="VEuPathDB" id="FungiDB:YOR303W"/>
<dbReference type="eggNOG" id="KOG0370">
    <property type="taxonomic scope" value="Eukaryota"/>
</dbReference>
<dbReference type="GeneTree" id="ENSGT00940000157241"/>
<dbReference type="HOGENOM" id="CLU_035901_1_1_1"/>
<dbReference type="InParanoid" id="P07258"/>
<dbReference type="OMA" id="CFSVQYH"/>
<dbReference type="OrthoDB" id="434at2759"/>
<dbReference type="BioCyc" id="MetaCyc:YOR303W-MONOMER"/>
<dbReference type="BioCyc" id="YEAST:YOR303W-MONOMER"/>
<dbReference type="UniPathway" id="UPA00068">
    <property type="reaction ID" value="UER00171"/>
</dbReference>
<dbReference type="BioGRID-ORCS" id="854479">
    <property type="hits" value="1 hit in 10 CRISPR screens"/>
</dbReference>
<dbReference type="CD-CODE" id="E03F929F">
    <property type="entry name" value="Stress granule"/>
</dbReference>
<dbReference type="PRO" id="PR:P07258"/>
<dbReference type="Proteomes" id="UP000002311">
    <property type="component" value="Chromosome XV"/>
</dbReference>
<dbReference type="RNAct" id="P07258">
    <property type="molecule type" value="protein"/>
</dbReference>
<dbReference type="GO" id="GO:0005951">
    <property type="term" value="C:carbamoyl-phosphate synthase complex"/>
    <property type="evidence" value="ECO:0000314"/>
    <property type="project" value="SGD"/>
</dbReference>
<dbReference type="GO" id="GO:0005737">
    <property type="term" value="C:cytoplasm"/>
    <property type="evidence" value="ECO:0000314"/>
    <property type="project" value="ComplexPortal"/>
</dbReference>
<dbReference type="GO" id="GO:0010494">
    <property type="term" value="C:cytoplasmic stress granule"/>
    <property type="evidence" value="ECO:0007005"/>
    <property type="project" value="SGD"/>
</dbReference>
<dbReference type="GO" id="GO:0005524">
    <property type="term" value="F:ATP binding"/>
    <property type="evidence" value="ECO:0007669"/>
    <property type="project" value="UniProtKB-KW"/>
</dbReference>
<dbReference type="GO" id="GO:0004088">
    <property type="term" value="F:carbamoyl-phosphate synthase (glutamine-hydrolyzing) activity"/>
    <property type="evidence" value="ECO:0007669"/>
    <property type="project" value="UniProtKB-EC"/>
</dbReference>
<dbReference type="GO" id="GO:0004359">
    <property type="term" value="F:glutaminase activity"/>
    <property type="evidence" value="ECO:0007669"/>
    <property type="project" value="RHEA"/>
</dbReference>
<dbReference type="GO" id="GO:0006207">
    <property type="term" value="P:'de novo' pyrimidine nucleobase biosynthetic process"/>
    <property type="evidence" value="ECO:0007669"/>
    <property type="project" value="InterPro"/>
</dbReference>
<dbReference type="GO" id="GO:0006541">
    <property type="term" value="P:glutamine metabolic process"/>
    <property type="evidence" value="ECO:0007669"/>
    <property type="project" value="InterPro"/>
</dbReference>
<dbReference type="GO" id="GO:0006526">
    <property type="term" value="P:L-arginine biosynthetic process"/>
    <property type="evidence" value="ECO:0000314"/>
    <property type="project" value="ComplexPortal"/>
</dbReference>
<dbReference type="GO" id="GO:0006221">
    <property type="term" value="P:pyrimidine nucleotide biosynthetic process"/>
    <property type="evidence" value="ECO:0000314"/>
    <property type="project" value="ComplexPortal"/>
</dbReference>
<dbReference type="CDD" id="cd01744">
    <property type="entry name" value="GATase1_CPSase"/>
    <property type="match status" value="1"/>
</dbReference>
<dbReference type="FunFam" id="3.40.50.880:FF:000016">
    <property type="entry name" value="Carbamoyl-phosphate synthase arginine-specific small chain"/>
    <property type="match status" value="1"/>
</dbReference>
<dbReference type="FunFam" id="3.50.30.20:FF:000003">
    <property type="entry name" value="Carbamoyl-phosphate synthase arginine-specific small chain"/>
    <property type="match status" value="1"/>
</dbReference>
<dbReference type="Gene3D" id="3.40.50.880">
    <property type="match status" value="1"/>
</dbReference>
<dbReference type="Gene3D" id="3.50.30.20">
    <property type="entry name" value="Carbamoyl-phosphate synthase small subunit, N-terminal domain"/>
    <property type="match status" value="1"/>
</dbReference>
<dbReference type="HAMAP" id="MF_01209">
    <property type="entry name" value="CPSase_S_chain"/>
    <property type="match status" value="1"/>
</dbReference>
<dbReference type="InterPro" id="IPR006274">
    <property type="entry name" value="CarbamoylP_synth_ssu"/>
</dbReference>
<dbReference type="InterPro" id="IPR002474">
    <property type="entry name" value="CarbamoylP_synth_ssu_N"/>
</dbReference>
<dbReference type="InterPro" id="IPR036480">
    <property type="entry name" value="CarbP_synth_ssu_N_sf"/>
</dbReference>
<dbReference type="InterPro" id="IPR029062">
    <property type="entry name" value="Class_I_gatase-like"/>
</dbReference>
<dbReference type="InterPro" id="IPR035686">
    <property type="entry name" value="CPSase_GATase1"/>
</dbReference>
<dbReference type="InterPro" id="IPR017926">
    <property type="entry name" value="GATASE"/>
</dbReference>
<dbReference type="NCBIfam" id="TIGR01368">
    <property type="entry name" value="CPSaseIIsmall"/>
    <property type="match status" value="1"/>
</dbReference>
<dbReference type="NCBIfam" id="NF009475">
    <property type="entry name" value="PRK12838.1"/>
    <property type="match status" value="1"/>
</dbReference>
<dbReference type="PANTHER" id="PTHR11405:SF4">
    <property type="entry name" value="CARBAMOYL-PHOSPHATE SYNTHASE ARGININE-SPECIFIC SMALL CHAIN"/>
    <property type="match status" value="1"/>
</dbReference>
<dbReference type="PANTHER" id="PTHR11405">
    <property type="entry name" value="CARBAMOYLTRANSFERASE FAMILY MEMBER"/>
    <property type="match status" value="1"/>
</dbReference>
<dbReference type="Pfam" id="PF00988">
    <property type="entry name" value="CPSase_sm_chain"/>
    <property type="match status" value="1"/>
</dbReference>
<dbReference type="Pfam" id="PF00117">
    <property type="entry name" value="GATase"/>
    <property type="match status" value="1"/>
</dbReference>
<dbReference type="PRINTS" id="PR00099">
    <property type="entry name" value="CPSGATASE"/>
</dbReference>
<dbReference type="PRINTS" id="PR00096">
    <property type="entry name" value="GATASE"/>
</dbReference>
<dbReference type="SMART" id="SM01097">
    <property type="entry name" value="CPSase_sm_chain"/>
    <property type="match status" value="1"/>
</dbReference>
<dbReference type="SUPFAM" id="SSF52021">
    <property type="entry name" value="Carbamoyl phosphate synthetase, small subunit N-terminal domain"/>
    <property type="match status" value="1"/>
</dbReference>
<dbReference type="SUPFAM" id="SSF52317">
    <property type="entry name" value="Class I glutamine amidotransferase-like"/>
    <property type="match status" value="1"/>
</dbReference>
<dbReference type="PROSITE" id="PS51273">
    <property type="entry name" value="GATASE_TYPE_1"/>
    <property type="match status" value="1"/>
</dbReference>
<proteinExistence type="evidence at protein level"/>
<protein>
    <recommendedName>
        <fullName>Carbamoyl phosphate synthase arginine-specific small chain</fullName>
        <shortName>CPS</shortName>
        <shortName>CPSase</shortName>
        <shortName>CPSase-arg</shortName>
        <ecNumber>6.3.5.5</ecNumber>
    </recommendedName>
    <alternativeName>
        <fullName>Arginine-specific carbamoyl phosphate synthetase, glutamine chain</fullName>
    </alternativeName>
    <alternativeName>
        <fullName>Carbamoyl phosphate synthase A</fullName>
        <shortName>CPS-A</shortName>
    </alternativeName>
    <alternativeName>
        <fullName>Glutamine-dependent carbamoyl phosphate synthetase</fullName>
    </alternativeName>
</protein>
<organism>
    <name type="scientific">Saccharomyces cerevisiae (strain ATCC 204508 / S288c)</name>
    <name type="common">Baker's yeast</name>
    <dbReference type="NCBI Taxonomy" id="559292"/>
    <lineage>
        <taxon>Eukaryota</taxon>
        <taxon>Fungi</taxon>
        <taxon>Dikarya</taxon>
        <taxon>Ascomycota</taxon>
        <taxon>Saccharomycotina</taxon>
        <taxon>Saccharomycetes</taxon>
        <taxon>Saccharomycetales</taxon>
        <taxon>Saccharomycetaceae</taxon>
        <taxon>Saccharomyces</taxon>
    </lineage>
</organism>